<feature type="chain" id="PRO_0000427173" description="Glycerol-3-phosphate dehydrogenase 1">
    <location>
        <begin position="1"/>
        <end position="516"/>
    </location>
</feature>
<feature type="binding site" evidence="1">
    <location>
        <begin position="28"/>
        <end position="56"/>
    </location>
    <ligand>
        <name>FAD</name>
        <dbReference type="ChEBI" id="CHEBI:57692"/>
    </ligand>
</feature>
<proteinExistence type="inferred from homology"/>
<gene>
    <name type="primary">glpD1</name>
    <name type="synonym">glpD</name>
    <name type="ordered locus">MT2309</name>
</gene>
<evidence type="ECO:0000250" key="1"/>
<evidence type="ECO:0000305" key="2"/>
<sequence length="516" mass="54176">MLMPHSAALNAARRSADLTALADGGALDVIVIGGGITGVGIALDAATRGLTVALVEKHDLAFGTSRWSSKLVHGGLRYLASGNVGIARRSAVERGILMTRNAPHLVHAMPQLVPLLPSMGHTKRALVRAGFLAGDALRVLAGTPAATLPRSRRIPASRVVEIAPTVRRDGLDGGLLAYDGQLIDDARLVMAVARTAAQHGARILTYVGASNVTGTSVELTDRRTRQSFALSARAVINAAGVWAGEIDPSLRLRPSRGTHLVFDAKSFANPTAALTIPIPGELNRFVFAMPEQLGRIYLGLTDEDAPGPIPDVPQPSSEEITFLLDTVNTALGTAVGTKDVIGAYAGLRPLIDTGGAGVQGRTADVSRDHAVFESPSGVISVVGGKLTEYRYMAEDVLNRAITLRHLRAAKCRTRNLPLIGAPANPGPAPGSGAGLPESLVARYGAEAANVAAAATCERPTEPVADGIDVTRAEFEYAVTHEGALDVDDILDRRTRIGLVPRDRERVVAVAKEFLSR</sequence>
<keyword id="KW-0963">Cytoplasm</keyword>
<keyword id="KW-0274">FAD</keyword>
<keyword id="KW-0285">Flavoprotein</keyword>
<keyword id="KW-0319">Glycerol metabolism</keyword>
<keyword id="KW-0560">Oxidoreductase</keyword>
<keyword id="KW-1185">Reference proteome</keyword>
<protein>
    <recommendedName>
        <fullName>Glycerol-3-phosphate dehydrogenase 1</fullName>
        <ecNumber>1.1.5.3</ecNumber>
    </recommendedName>
</protein>
<comment type="catalytic activity">
    <reaction>
        <text>a quinone + sn-glycerol 3-phosphate = dihydroxyacetone phosphate + a quinol</text>
        <dbReference type="Rhea" id="RHEA:18977"/>
        <dbReference type="ChEBI" id="CHEBI:24646"/>
        <dbReference type="ChEBI" id="CHEBI:57597"/>
        <dbReference type="ChEBI" id="CHEBI:57642"/>
        <dbReference type="ChEBI" id="CHEBI:132124"/>
        <dbReference type="EC" id="1.1.5.3"/>
    </reaction>
</comment>
<comment type="cofactor">
    <cofactor evidence="1">
        <name>FAD</name>
        <dbReference type="ChEBI" id="CHEBI:57692"/>
    </cofactor>
</comment>
<comment type="subcellular location">
    <subcellularLocation>
        <location evidence="1">Cytoplasm</location>
    </subcellularLocation>
</comment>
<comment type="similarity">
    <text evidence="2">Belongs to the FAD-dependent glycerol-3-phosphate dehydrogenase family.</text>
</comment>
<comment type="sequence caution" evidence="2">
    <conflict type="erroneous initiation">
        <sequence resource="EMBL-CDS" id="AAK46593"/>
    </conflict>
</comment>
<name>GLPD1_MYCTO</name>
<organism>
    <name type="scientific">Mycobacterium tuberculosis (strain CDC 1551 / Oshkosh)</name>
    <dbReference type="NCBI Taxonomy" id="83331"/>
    <lineage>
        <taxon>Bacteria</taxon>
        <taxon>Bacillati</taxon>
        <taxon>Actinomycetota</taxon>
        <taxon>Actinomycetes</taxon>
        <taxon>Mycobacteriales</taxon>
        <taxon>Mycobacteriaceae</taxon>
        <taxon>Mycobacterium</taxon>
        <taxon>Mycobacterium tuberculosis complex</taxon>
    </lineage>
</organism>
<accession>P9WN80</accession>
<accession>L0T922</accession>
<accession>P64182</accession>
<accession>Q10502</accession>
<reference key="1">
    <citation type="journal article" date="2002" name="J. Bacteriol.">
        <title>Whole-genome comparison of Mycobacterium tuberculosis clinical and laboratory strains.</title>
        <authorList>
            <person name="Fleischmann R.D."/>
            <person name="Alland D."/>
            <person name="Eisen J.A."/>
            <person name="Carpenter L."/>
            <person name="White O."/>
            <person name="Peterson J.D."/>
            <person name="DeBoy R.T."/>
            <person name="Dodson R.J."/>
            <person name="Gwinn M.L."/>
            <person name="Haft D.H."/>
            <person name="Hickey E.K."/>
            <person name="Kolonay J.F."/>
            <person name="Nelson W.C."/>
            <person name="Umayam L.A."/>
            <person name="Ermolaeva M.D."/>
            <person name="Salzberg S.L."/>
            <person name="Delcher A."/>
            <person name="Utterback T.R."/>
            <person name="Weidman J.F."/>
            <person name="Khouri H.M."/>
            <person name="Gill J."/>
            <person name="Mikula A."/>
            <person name="Bishai W."/>
            <person name="Jacobs W.R. Jr."/>
            <person name="Venter J.C."/>
            <person name="Fraser C.M."/>
        </authorList>
    </citation>
    <scope>NUCLEOTIDE SEQUENCE [LARGE SCALE GENOMIC DNA]</scope>
    <source>
        <strain>CDC 1551 / Oshkosh</strain>
    </source>
</reference>
<dbReference type="EC" id="1.1.5.3"/>
<dbReference type="EMBL" id="AE000516">
    <property type="protein sequence ID" value="AAK46593.1"/>
    <property type="status" value="ALT_INIT"/>
    <property type="molecule type" value="Genomic_DNA"/>
</dbReference>
<dbReference type="PIR" id="E70779">
    <property type="entry name" value="E70779"/>
</dbReference>
<dbReference type="RefSeq" id="WP_003411591.1">
    <property type="nucleotide sequence ID" value="NZ_KK341227.1"/>
</dbReference>
<dbReference type="SMR" id="P9WN80"/>
<dbReference type="KEGG" id="mtc:MT2309"/>
<dbReference type="PATRIC" id="fig|83331.31.peg.2486"/>
<dbReference type="HOGENOM" id="CLU_015740_5_1_11"/>
<dbReference type="Proteomes" id="UP000001020">
    <property type="component" value="Chromosome"/>
</dbReference>
<dbReference type="GO" id="GO:0005737">
    <property type="term" value="C:cytoplasm"/>
    <property type="evidence" value="ECO:0007669"/>
    <property type="project" value="UniProtKB-SubCell"/>
</dbReference>
<dbReference type="GO" id="GO:0004368">
    <property type="term" value="F:glycerol-3-phosphate dehydrogenase (quinone) activity"/>
    <property type="evidence" value="ECO:0007669"/>
    <property type="project" value="UniProtKB-EC"/>
</dbReference>
<dbReference type="GO" id="GO:0006071">
    <property type="term" value="P:glycerol metabolic process"/>
    <property type="evidence" value="ECO:0007669"/>
    <property type="project" value="UniProtKB-KW"/>
</dbReference>
<dbReference type="GO" id="GO:0046168">
    <property type="term" value="P:glycerol-3-phosphate catabolic process"/>
    <property type="evidence" value="ECO:0007669"/>
    <property type="project" value="TreeGrafter"/>
</dbReference>
<dbReference type="FunFam" id="1.10.8.870:FF:000012">
    <property type="entry name" value="Glycerol-3-phosphate dehydrogenase"/>
    <property type="match status" value="1"/>
</dbReference>
<dbReference type="Gene3D" id="1.10.8.870">
    <property type="entry name" value="Alpha-glycerophosphate oxidase, cap domain"/>
    <property type="match status" value="1"/>
</dbReference>
<dbReference type="Gene3D" id="3.30.9.10">
    <property type="entry name" value="D-Amino Acid Oxidase, subunit A, domain 2"/>
    <property type="match status" value="1"/>
</dbReference>
<dbReference type="Gene3D" id="3.50.50.60">
    <property type="entry name" value="FAD/NAD(P)-binding domain"/>
    <property type="match status" value="1"/>
</dbReference>
<dbReference type="InterPro" id="IPR031656">
    <property type="entry name" value="DAO_C"/>
</dbReference>
<dbReference type="InterPro" id="IPR038299">
    <property type="entry name" value="DAO_C_sf"/>
</dbReference>
<dbReference type="InterPro" id="IPR006076">
    <property type="entry name" value="FAD-dep_OxRdtase"/>
</dbReference>
<dbReference type="InterPro" id="IPR036188">
    <property type="entry name" value="FAD/NAD-bd_sf"/>
</dbReference>
<dbReference type="InterPro" id="IPR000447">
    <property type="entry name" value="G3P_DH_FAD-dep"/>
</dbReference>
<dbReference type="PANTHER" id="PTHR11985:SF35">
    <property type="entry name" value="ANAEROBIC GLYCEROL-3-PHOSPHATE DEHYDROGENASE SUBUNIT A"/>
    <property type="match status" value="1"/>
</dbReference>
<dbReference type="PANTHER" id="PTHR11985">
    <property type="entry name" value="GLYCEROL-3-PHOSPHATE DEHYDROGENASE"/>
    <property type="match status" value="1"/>
</dbReference>
<dbReference type="Pfam" id="PF01266">
    <property type="entry name" value="DAO"/>
    <property type="match status" value="1"/>
</dbReference>
<dbReference type="Pfam" id="PF16901">
    <property type="entry name" value="DAO_C"/>
    <property type="match status" value="1"/>
</dbReference>
<dbReference type="PRINTS" id="PR01001">
    <property type="entry name" value="FADG3PDH"/>
</dbReference>
<dbReference type="SUPFAM" id="SSF51905">
    <property type="entry name" value="FAD/NAD(P)-binding domain"/>
    <property type="match status" value="1"/>
</dbReference>
<dbReference type="PROSITE" id="PS00977">
    <property type="entry name" value="FAD_G3PDH_1"/>
    <property type="match status" value="1"/>
</dbReference>
<dbReference type="PROSITE" id="PS00978">
    <property type="entry name" value="FAD_G3PDH_2"/>
    <property type="match status" value="1"/>
</dbReference>